<keyword id="KW-0025">Alternative splicing</keyword>
<keyword id="KW-0472">Membrane</keyword>
<keyword id="KW-1185">Reference proteome</keyword>
<keyword id="KW-0677">Repeat</keyword>
<keyword id="KW-0812">Transmembrane</keyword>
<keyword id="KW-1133">Transmembrane helix</keyword>
<comment type="subcellular location">
    <subcellularLocation>
        <location evidence="1">Membrane</location>
        <topology evidence="4">Multi-pass membrane protein</topology>
    </subcellularLocation>
</comment>
<comment type="alternative products">
    <event type="alternative splicing"/>
    <isoform>
        <id>F4IQX1-1</id>
        <name>1</name>
        <sequence type="displayed"/>
    </isoform>
    <isoform>
        <id>F4IQX1-2</id>
        <name>2</name>
        <sequence type="described" ref="VSP_045503"/>
    </isoform>
</comment>
<comment type="similarity">
    <text evidence="4">Belongs to the drug/metabolite transporter (DMT) superfamily. Plant drug/metabolite exporter (P-DME) (TC 2.A.7.4) family.</text>
</comment>
<protein>
    <recommendedName>
        <fullName>WAT1-related protein At2g37450</fullName>
    </recommendedName>
</protein>
<proteinExistence type="evidence at transcript level"/>
<accession>F4IQX1</accession>
<accession>Q0WRU7</accession>
<accession>Q94B02</accession>
<accession>Q9ZUS2</accession>
<name>WTR12_ARATH</name>
<sequence>MACMKKALPFILMVLLQIGYAGMDILTKDVLNKGMSIYVLSVYRHGVATVVMAPFAFYFDNPVIAQNLFNLGMKYTTATFAIALYNTLPAVTFILALIFRLESVKFQSIRSAAKVVGTVTTVGGIMVMTLVKGPALDLFWTKGPSAQNTVGTDIHSSIKGAVLVTIGCFSYACFMILQAITLKTYPAELSLATWICLIGTIEGVVVALVMEKGNPSVWAIGWDTKLLTITYSGIVCSALGYYIGGVVMKTRGPVFVTAFKPLCMIVVAIMSSIIFDEQMYLGRALGATVICVGLYLVIWGKAKDYEYPSTPQIDDDLAQATTSKQKEQRRTVIESV</sequence>
<organism>
    <name type="scientific">Arabidopsis thaliana</name>
    <name type="common">Mouse-ear cress</name>
    <dbReference type="NCBI Taxonomy" id="3702"/>
    <lineage>
        <taxon>Eukaryota</taxon>
        <taxon>Viridiplantae</taxon>
        <taxon>Streptophyta</taxon>
        <taxon>Embryophyta</taxon>
        <taxon>Tracheophyta</taxon>
        <taxon>Spermatophyta</taxon>
        <taxon>Magnoliopsida</taxon>
        <taxon>eudicotyledons</taxon>
        <taxon>Gunneridae</taxon>
        <taxon>Pentapetalae</taxon>
        <taxon>rosids</taxon>
        <taxon>malvids</taxon>
        <taxon>Brassicales</taxon>
        <taxon>Brassicaceae</taxon>
        <taxon>Camelineae</taxon>
        <taxon>Arabidopsis</taxon>
    </lineage>
</organism>
<feature type="chain" id="PRO_0000421320" description="WAT1-related protein At2g37450">
    <location>
        <begin position="1"/>
        <end position="336"/>
    </location>
</feature>
<feature type="transmembrane region" description="Helical" evidence="2">
    <location>
        <begin position="7"/>
        <end position="27"/>
    </location>
</feature>
<feature type="transmembrane region" description="Helical" evidence="2">
    <location>
        <begin position="45"/>
        <end position="65"/>
    </location>
</feature>
<feature type="transmembrane region" description="Helical" evidence="2">
    <location>
        <begin position="79"/>
        <end position="99"/>
    </location>
</feature>
<feature type="transmembrane region" description="Helical" evidence="2">
    <location>
        <begin position="115"/>
        <end position="135"/>
    </location>
</feature>
<feature type="transmembrane region" description="Helical" evidence="2">
    <location>
        <begin position="160"/>
        <end position="180"/>
    </location>
</feature>
<feature type="transmembrane region" description="Helical" evidence="2">
    <location>
        <begin position="189"/>
        <end position="209"/>
    </location>
</feature>
<feature type="transmembrane region" description="Helical" evidence="2">
    <location>
        <begin position="227"/>
        <end position="247"/>
    </location>
</feature>
<feature type="transmembrane region" description="Helical" evidence="2">
    <location>
        <begin position="255"/>
        <end position="275"/>
    </location>
</feature>
<feature type="transmembrane region" description="Helical" evidence="2">
    <location>
        <begin position="279"/>
        <end position="299"/>
    </location>
</feature>
<feature type="domain" description="EamA 1">
    <location>
        <begin position="63"/>
        <end position="126"/>
    </location>
</feature>
<feature type="domain" description="EamA 2">
    <location>
        <begin position="169"/>
        <end position="298"/>
    </location>
</feature>
<feature type="splice variant" id="VSP_045503" description="In isoform 2." evidence="3">
    <original>NPVIAQNLFNLGMKYTTATFAIALYNTLPAVTFILALIFR</original>
    <variation>K</variation>
    <location>
        <begin position="61"/>
        <end position="100"/>
    </location>
</feature>
<feature type="sequence conflict" description="In Ref. 4; BAF00152." evidence="4" ref="4">
    <original>I</original>
    <variation>V</variation>
    <location>
        <position position="109"/>
    </location>
</feature>
<dbReference type="EMBL" id="AC005896">
    <property type="protein sequence ID" value="AAC98071.2"/>
    <property type="molecule type" value="Genomic_DNA"/>
</dbReference>
<dbReference type="EMBL" id="CP002685">
    <property type="protein sequence ID" value="AEC09401.1"/>
    <property type="molecule type" value="Genomic_DNA"/>
</dbReference>
<dbReference type="EMBL" id="CP002685">
    <property type="protein sequence ID" value="AEC09402.1"/>
    <property type="molecule type" value="Genomic_DNA"/>
</dbReference>
<dbReference type="EMBL" id="AY044325">
    <property type="protein sequence ID" value="AAK73266.1"/>
    <property type="molecule type" value="mRNA"/>
</dbReference>
<dbReference type="EMBL" id="AK228198">
    <property type="protein sequence ID" value="BAF00152.1"/>
    <property type="molecule type" value="mRNA"/>
</dbReference>
<dbReference type="PIR" id="H84792">
    <property type="entry name" value="H84792"/>
</dbReference>
<dbReference type="RefSeq" id="NP_001078016.1">
    <molecule id="F4IQX1-1"/>
    <property type="nucleotide sequence ID" value="NM_001084547.2"/>
</dbReference>
<dbReference type="RefSeq" id="NP_565861.1">
    <molecule id="F4IQX1-2"/>
    <property type="nucleotide sequence ID" value="NM_129300.3"/>
</dbReference>
<dbReference type="FunCoup" id="F4IQX1">
    <property type="interactions" value="269"/>
</dbReference>
<dbReference type="STRING" id="3702.F4IQX1"/>
<dbReference type="PaxDb" id="3702-AT2G37450.2"/>
<dbReference type="EnsemblPlants" id="AT2G37450.1">
    <molecule id="F4IQX1-2"/>
    <property type="protein sequence ID" value="AT2G37450.1"/>
    <property type="gene ID" value="AT2G37450"/>
</dbReference>
<dbReference type="EnsemblPlants" id="AT2G37450.2">
    <molecule id="F4IQX1-1"/>
    <property type="protein sequence ID" value="AT2G37450.2"/>
    <property type="gene ID" value="AT2G37450"/>
</dbReference>
<dbReference type="GeneID" id="818322"/>
<dbReference type="Gramene" id="AT2G37450.1">
    <molecule id="F4IQX1-2"/>
    <property type="protein sequence ID" value="AT2G37450.1"/>
    <property type="gene ID" value="AT2G37450"/>
</dbReference>
<dbReference type="Gramene" id="AT2G37450.2">
    <molecule id="F4IQX1-1"/>
    <property type="protein sequence ID" value="AT2G37450.2"/>
    <property type="gene ID" value="AT2G37450"/>
</dbReference>
<dbReference type="KEGG" id="ath:AT2G37450"/>
<dbReference type="Araport" id="AT2G37450"/>
<dbReference type="TAIR" id="AT2G37450">
    <property type="gene designation" value="UMAMIT13"/>
</dbReference>
<dbReference type="eggNOG" id="ENOG502QUF7">
    <property type="taxonomic scope" value="Eukaryota"/>
</dbReference>
<dbReference type="HOGENOM" id="CLU_025359_1_1_1"/>
<dbReference type="InParanoid" id="F4IQX1"/>
<dbReference type="OMA" id="GHEIINM"/>
<dbReference type="PRO" id="PR:F4IQX1"/>
<dbReference type="Proteomes" id="UP000006548">
    <property type="component" value="Chromosome 2"/>
</dbReference>
<dbReference type="ExpressionAtlas" id="F4IQX1">
    <property type="expression patterns" value="baseline and differential"/>
</dbReference>
<dbReference type="GO" id="GO:0016020">
    <property type="term" value="C:membrane"/>
    <property type="evidence" value="ECO:0007669"/>
    <property type="project" value="UniProtKB-SubCell"/>
</dbReference>
<dbReference type="GO" id="GO:0022857">
    <property type="term" value="F:transmembrane transporter activity"/>
    <property type="evidence" value="ECO:0007669"/>
    <property type="project" value="InterPro"/>
</dbReference>
<dbReference type="InterPro" id="IPR000620">
    <property type="entry name" value="EamA_dom"/>
</dbReference>
<dbReference type="InterPro" id="IPR030184">
    <property type="entry name" value="WAT1-related"/>
</dbReference>
<dbReference type="PANTHER" id="PTHR31218">
    <property type="entry name" value="WAT1-RELATED PROTEIN"/>
    <property type="match status" value="1"/>
</dbReference>
<dbReference type="Pfam" id="PF00892">
    <property type="entry name" value="EamA"/>
    <property type="match status" value="1"/>
</dbReference>
<dbReference type="SUPFAM" id="SSF103481">
    <property type="entry name" value="Multidrug resistance efflux transporter EmrE"/>
    <property type="match status" value="2"/>
</dbReference>
<reference key="1">
    <citation type="journal article" date="1999" name="Nature">
        <title>Sequence and analysis of chromosome 2 of the plant Arabidopsis thaliana.</title>
        <authorList>
            <person name="Lin X."/>
            <person name="Kaul S."/>
            <person name="Rounsley S.D."/>
            <person name="Shea T.P."/>
            <person name="Benito M.-I."/>
            <person name="Town C.D."/>
            <person name="Fujii C.Y."/>
            <person name="Mason T.M."/>
            <person name="Bowman C.L."/>
            <person name="Barnstead M.E."/>
            <person name="Feldblyum T.V."/>
            <person name="Buell C.R."/>
            <person name="Ketchum K.A."/>
            <person name="Lee J.J."/>
            <person name="Ronning C.M."/>
            <person name="Koo H.L."/>
            <person name="Moffat K.S."/>
            <person name="Cronin L.A."/>
            <person name="Shen M."/>
            <person name="Pai G."/>
            <person name="Van Aken S."/>
            <person name="Umayam L."/>
            <person name="Tallon L.J."/>
            <person name="Gill J.E."/>
            <person name="Adams M.D."/>
            <person name="Carrera A.J."/>
            <person name="Creasy T.H."/>
            <person name="Goodman H.M."/>
            <person name="Somerville C.R."/>
            <person name="Copenhaver G.P."/>
            <person name="Preuss D."/>
            <person name="Nierman W.C."/>
            <person name="White O."/>
            <person name="Eisen J.A."/>
            <person name="Salzberg S.L."/>
            <person name="Fraser C.M."/>
            <person name="Venter J.C."/>
        </authorList>
    </citation>
    <scope>NUCLEOTIDE SEQUENCE [LARGE SCALE GENOMIC DNA] (ISOFORM 2)</scope>
    <source>
        <strain>cv. Columbia</strain>
    </source>
</reference>
<reference key="2">
    <citation type="journal article" date="2017" name="Plant J.">
        <title>Araport11: a complete reannotation of the Arabidopsis thaliana reference genome.</title>
        <authorList>
            <person name="Cheng C.Y."/>
            <person name="Krishnakumar V."/>
            <person name="Chan A.P."/>
            <person name="Thibaud-Nissen F."/>
            <person name="Schobel S."/>
            <person name="Town C.D."/>
        </authorList>
    </citation>
    <scope>GENOME REANNOTATION</scope>
    <source>
        <strain>cv. Columbia</strain>
    </source>
</reference>
<reference key="3">
    <citation type="journal article" date="2003" name="Science">
        <title>Empirical analysis of transcriptional activity in the Arabidopsis genome.</title>
        <authorList>
            <person name="Yamada K."/>
            <person name="Lim J."/>
            <person name="Dale J.M."/>
            <person name="Chen H."/>
            <person name="Shinn P."/>
            <person name="Palm C.J."/>
            <person name="Southwick A.M."/>
            <person name="Wu H.C."/>
            <person name="Kim C.J."/>
            <person name="Nguyen M."/>
            <person name="Pham P.K."/>
            <person name="Cheuk R.F."/>
            <person name="Karlin-Newmann G."/>
            <person name="Liu S.X."/>
            <person name="Lam B."/>
            <person name="Sakano H."/>
            <person name="Wu T."/>
            <person name="Yu G."/>
            <person name="Miranda M."/>
            <person name="Quach H.L."/>
            <person name="Tripp M."/>
            <person name="Chang C.H."/>
            <person name="Lee J.M."/>
            <person name="Toriumi M.J."/>
            <person name="Chan M.M."/>
            <person name="Tang C.C."/>
            <person name="Onodera C.S."/>
            <person name="Deng J.M."/>
            <person name="Akiyama K."/>
            <person name="Ansari Y."/>
            <person name="Arakawa T."/>
            <person name="Banh J."/>
            <person name="Banno F."/>
            <person name="Bowser L."/>
            <person name="Brooks S.Y."/>
            <person name="Carninci P."/>
            <person name="Chao Q."/>
            <person name="Choy N."/>
            <person name="Enju A."/>
            <person name="Goldsmith A.D."/>
            <person name="Gurjal M."/>
            <person name="Hansen N.F."/>
            <person name="Hayashizaki Y."/>
            <person name="Johnson-Hopson C."/>
            <person name="Hsuan V.W."/>
            <person name="Iida K."/>
            <person name="Karnes M."/>
            <person name="Khan S."/>
            <person name="Koesema E."/>
            <person name="Ishida J."/>
            <person name="Jiang P.X."/>
            <person name="Jones T."/>
            <person name="Kawai J."/>
            <person name="Kamiya A."/>
            <person name="Meyers C."/>
            <person name="Nakajima M."/>
            <person name="Narusaka M."/>
            <person name="Seki M."/>
            <person name="Sakurai T."/>
            <person name="Satou M."/>
            <person name="Tamse R."/>
            <person name="Vaysberg M."/>
            <person name="Wallender E.K."/>
            <person name="Wong C."/>
            <person name="Yamamura Y."/>
            <person name="Yuan S."/>
            <person name="Shinozaki K."/>
            <person name="Davis R.W."/>
            <person name="Theologis A."/>
            <person name="Ecker J.R."/>
        </authorList>
    </citation>
    <scope>NUCLEOTIDE SEQUENCE [LARGE SCALE MRNA] (ISOFORM 2)</scope>
    <source>
        <strain>cv. Columbia</strain>
    </source>
</reference>
<reference key="4">
    <citation type="submission" date="2006-07" db="EMBL/GenBank/DDBJ databases">
        <title>Large-scale analysis of RIKEN Arabidopsis full-length (RAFL) cDNAs.</title>
        <authorList>
            <person name="Totoki Y."/>
            <person name="Seki M."/>
            <person name="Ishida J."/>
            <person name="Nakajima M."/>
            <person name="Enju A."/>
            <person name="Kamiya A."/>
            <person name="Narusaka M."/>
            <person name="Shin-i T."/>
            <person name="Nakagawa M."/>
            <person name="Sakamoto N."/>
            <person name="Oishi K."/>
            <person name="Kohara Y."/>
            <person name="Kobayashi M."/>
            <person name="Toyoda A."/>
            <person name="Sakaki Y."/>
            <person name="Sakurai T."/>
            <person name="Iida K."/>
            <person name="Akiyama K."/>
            <person name="Satou M."/>
            <person name="Toyoda T."/>
            <person name="Konagaya A."/>
            <person name="Carninci P."/>
            <person name="Kawai J."/>
            <person name="Hayashizaki Y."/>
            <person name="Shinozaki K."/>
        </authorList>
    </citation>
    <scope>NUCLEOTIDE SEQUENCE [LARGE SCALE MRNA]</scope>
    <source>
        <strain>cv. Columbia</strain>
    </source>
</reference>
<gene>
    <name type="ordered locus">At2g37450</name>
    <name type="ORF">F3G5.24</name>
</gene>
<evidence type="ECO:0000250" key="1"/>
<evidence type="ECO:0000255" key="2"/>
<evidence type="ECO:0000303" key="3">
    <source>
    </source>
</evidence>
<evidence type="ECO:0000305" key="4"/>